<sequence>MALNLSQKQEVVAELADIAAKAHSLIAAEYAGITVSQMTAMRKQARETGVFLKVVKNTLAVRAVEGTDFAVAADKLVGPLLYAFSMEEPGAAGRLIKEFAKGNDKLQAKVVSIGGELFPASHVDVLASLPTLDQALAMLARVLSEPAAMFARAVKAVGDKQGGGDEAAAPVAETAEA</sequence>
<organism>
    <name type="scientific">Xanthomonas campestris pv. campestris (strain 8004)</name>
    <dbReference type="NCBI Taxonomy" id="314565"/>
    <lineage>
        <taxon>Bacteria</taxon>
        <taxon>Pseudomonadati</taxon>
        <taxon>Pseudomonadota</taxon>
        <taxon>Gammaproteobacteria</taxon>
        <taxon>Lysobacterales</taxon>
        <taxon>Lysobacteraceae</taxon>
        <taxon>Xanthomonas</taxon>
    </lineage>
</organism>
<feature type="chain" id="PRO_0000234906" description="Large ribosomal subunit protein uL10">
    <location>
        <begin position="1"/>
        <end position="177"/>
    </location>
</feature>
<protein>
    <recommendedName>
        <fullName evidence="1">Large ribosomal subunit protein uL10</fullName>
    </recommendedName>
    <alternativeName>
        <fullName evidence="2">50S ribosomal protein L10</fullName>
    </alternativeName>
</protein>
<name>RL10_XANC8</name>
<comment type="function">
    <text evidence="1">Forms part of the ribosomal stalk, playing a central role in the interaction of the ribosome with GTP-bound translation factors.</text>
</comment>
<comment type="subunit">
    <text evidence="1">Part of the ribosomal stalk of the 50S ribosomal subunit. The N-terminus interacts with L11 and the large rRNA to form the base of the stalk. The C-terminus forms an elongated spine to which L12 dimers bind in a sequential fashion forming a multimeric L10(L12)X complex.</text>
</comment>
<comment type="similarity">
    <text evidence="1">Belongs to the universal ribosomal protein uL10 family.</text>
</comment>
<reference key="1">
    <citation type="journal article" date="2005" name="Genome Res.">
        <title>Comparative and functional genomic analyses of the pathogenicity of phytopathogen Xanthomonas campestris pv. campestris.</title>
        <authorList>
            <person name="Qian W."/>
            <person name="Jia Y."/>
            <person name="Ren S.-X."/>
            <person name="He Y.-Q."/>
            <person name="Feng J.-X."/>
            <person name="Lu L.-F."/>
            <person name="Sun Q."/>
            <person name="Ying G."/>
            <person name="Tang D.-J."/>
            <person name="Tang H."/>
            <person name="Wu W."/>
            <person name="Hao P."/>
            <person name="Wang L."/>
            <person name="Jiang B.-L."/>
            <person name="Zeng S."/>
            <person name="Gu W.-Y."/>
            <person name="Lu G."/>
            <person name="Rong L."/>
            <person name="Tian Y."/>
            <person name="Yao Z."/>
            <person name="Fu G."/>
            <person name="Chen B."/>
            <person name="Fang R."/>
            <person name="Qiang B."/>
            <person name="Chen Z."/>
            <person name="Zhao G.-P."/>
            <person name="Tang J.-L."/>
            <person name="He C."/>
        </authorList>
    </citation>
    <scope>NUCLEOTIDE SEQUENCE [LARGE SCALE GENOMIC DNA]</scope>
    <source>
        <strain>8004</strain>
    </source>
</reference>
<keyword id="KW-0687">Ribonucleoprotein</keyword>
<keyword id="KW-0689">Ribosomal protein</keyword>
<keyword id="KW-0694">RNA-binding</keyword>
<keyword id="KW-0699">rRNA-binding</keyword>
<evidence type="ECO:0000255" key="1">
    <source>
        <dbReference type="HAMAP-Rule" id="MF_00362"/>
    </source>
</evidence>
<evidence type="ECO:0000305" key="2"/>
<accession>Q4URD0</accession>
<proteinExistence type="inferred from homology"/>
<dbReference type="EMBL" id="CP000050">
    <property type="protein sequence ID" value="AAY50393.1"/>
    <property type="molecule type" value="Genomic_DNA"/>
</dbReference>
<dbReference type="RefSeq" id="WP_011036116.1">
    <property type="nucleotide sequence ID" value="NZ_CP155948.1"/>
</dbReference>
<dbReference type="SMR" id="Q4URD0"/>
<dbReference type="KEGG" id="xcb:XC_3349"/>
<dbReference type="HOGENOM" id="CLU_092227_0_1_6"/>
<dbReference type="Proteomes" id="UP000000420">
    <property type="component" value="Chromosome"/>
</dbReference>
<dbReference type="GO" id="GO:0015934">
    <property type="term" value="C:large ribosomal subunit"/>
    <property type="evidence" value="ECO:0007669"/>
    <property type="project" value="InterPro"/>
</dbReference>
<dbReference type="GO" id="GO:0070180">
    <property type="term" value="F:large ribosomal subunit rRNA binding"/>
    <property type="evidence" value="ECO:0007669"/>
    <property type="project" value="UniProtKB-UniRule"/>
</dbReference>
<dbReference type="GO" id="GO:0003735">
    <property type="term" value="F:structural constituent of ribosome"/>
    <property type="evidence" value="ECO:0007669"/>
    <property type="project" value="InterPro"/>
</dbReference>
<dbReference type="GO" id="GO:0006412">
    <property type="term" value="P:translation"/>
    <property type="evidence" value="ECO:0007669"/>
    <property type="project" value="UniProtKB-UniRule"/>
</dbReference>
<dbReference type="CDD" id="cd05797">
    <property type="entry name" value="Ribosomal_L10"/>
    <property type="match status" value="1"/>
</dbReference>
<dbReference type="FunFam" id="3.30.70.1730:FF:000001">
    <property type="entry name" value="50S ribosomal protein L10"/>
    <property type="match status" value="1"/>
</dbReference>
<dbReference type="Gene3D" id="3.30.70.1730">
    <property type="match status" value="1"/>
</dbReference>
<dbReference type="HAMAP" id="MF_00362">
    <property type="entry name" value="Ribosomal_uL10"/>
    <property type="match status" value="1"/>
</dbReference>
<dbReference type="InterPro" id="IPR001790">
    <property type="entry name" value="Ribosomal_uL10"/>
</dbReference>
<dbReference type="InterPro" id="IPR043141">
    <property type="entry name" value="Ribosomal_uL10-like_sf"/>
</dbReference>
<dbReference type="InterPro" id="IPR022973">
    <property type="entry name" value="Ribosomal_uL10_bac"/>
</dbReference>
<dbReference type="InterPro" id="IPR047865">
    <property type="entry name" value="Ribosomal_uL10_bac_type"/>
</dbReference>
<dbReference type="InterPro" id="IPR002363">
    <property type="entry name" value="Ribosomal_uL10_CS_bac"/>
</dbReference>
<dbReference type="NCBIfam" id="NF000955">
    <property type="entry name" value="PRK00099.1-1"/>
    <property type="match status" value="1"/>
</dbReference>
<dbReference type="PANTHER" id="PTHR11560">
    <property type="entry name" value="39S RIBOSOMAL PROTEIN L10, MITOCHONDRIAL"/>
    <property type="match status" value="1"/>
</dbReference>
<dbReference type="Pfam" id="PF00466">
    <property type="entry name" value="Ribosomal_L10"/>
    <property type="match status" value="1"/>
</dbReference>
<dbReference type="SUPFAM" id="SSF160369">
    <property type="entry name" value="Ribosomal protein L10-like"/>
    <property type="match status" value="1"/>
</dbReference>
<dbReference type="PROSITE" id="PS01109">
    <property type="entry name" value="RIBOSOMAL_L10"/>
    <property type="match status" value="1"/>
</dbReference>
<gene>
    <name evidence="1" type="primary">rplJ</name>
    <name type="ordered locus">XC_3349</name>
</gene>